<organism>
    <name type="scientific">Yersinia pestis bv. Antiqua (strain Antiqua)</name>
    <dbReference type="NCBI Taxonomy" id="360102"/>
    <lineage>
        <taxon>Bacteria</taxon>
        <taxon>Pseudomonadati</taxon>
        <taxon>Pseudomonadota</taxon>
        <taxon>Gammaproteobacteria</taxon>
        <taxon>Enterobacterales</taxon>
        <taxon>Yersiniaceae</taxon>
        <taxon>Yersinia</taxon>
    </lineage>
</organism>
<evidence type="ECO:0000255" key="1">
    <source>
        <dbReference type="HAMAP-Rule" id="MF_00652"/>
    </source>
</evidence>
<evidence type="ECO:0000305" key="2"/>
<sequence length="258" mass="29073">MLIIISPAKTLDYQSPLATTKFSQPEMLDKSQALIEICRELTPAQISSLMGISDKLAGLNAARFSEWQPDFTPANARQAILAFKGDVYTGMQAESFSEADFDFAQQHLRMLSGLYGLLRPLDLMQPYRLEMGTKLANPRGKDLYAFWGDQITEKLNQALELQGDNILINLASDEYFKAVKPAKLSGSLIKPVFLDEKNGKYKIISFYAKKARGLMSRFIIQNKLTKPEQLVDFNLEGYEFDAGLSAKNELVFKRAEQH</sequence>
<proteinExistence type="inferred from homology"/>
<feature type="chain" id="PRO_0000262076" description="UPF0246 protein YPA_4054">
    <location>
        <begin position="1"/>
        <end position="258"/>
    </location>
</feature>
<gene>
    <name type="ordered locus">YPA_4054</name>
</gene>
<protein>
    <recommendedName>
        <fullName evidence="1">UPF0246 protein YPA_4054</fullName>
    </recommendedName>
</protein>
<name>Y4054_YERPA</name>
<dbReference type="EMBL" id="CP000308">
    <property type="protein sequence ID" value="ABG16015.1"/>
    <property type="status" value="ALT_INIT"/>
    <property type="molecule type" value="Genomic_DNA"/>
</dbReference>
<dbReference type="SMR" id="Q1C0K7"/>
<dbReference type="KEGG" id="ypa:YPA_4054"/>
<dbReference type="Proteomes" id="UP000001971">
    <property type="component" value="Chromosome"/>
</dbReference>
<dbReference type="GO" id="GO:0005829">
    <property type="term" value="C:cytosol"/>
    <property type="evidence" value="ECO:0007669"/>
    <property type="project" value="TreeGrafter"/>
</dbReference>
<dbReference type="GO" id="GO:0033194">
    <property type="term" value="P:response to hydroperoxide"/>
    <property type="evidence" value="ECO:0007669"/>
    <property type="project" value="TreeGrafter"/>
</dbReference>
<dbReference type="HAMAP" id="MF_00652">
    <property type="entry name" value="UPF0246"/>
    <property type="match status" value="1"/>
</dbReference>
<dbReference type="InterPro" id="IPR005583">
    <property type="entry name" value="YaaA"/>
</dbReference>
<dbReference type="NCBIfam" id="NF002541">
    <property type="entry name" value="PRK02101.1-1"/>
    <property type="match status" value="1"/>
</dbReference>
<dbReference type="NCBIfam" id="NF002542">
    <property type="entry name" value="PRK02101.1-3"/>
    <property type="match status" value="1"/>
</dbReference>
<dbReference type="PANTHER" id="PTHR30283:SF4">
    <property type="entry name" value="PEROXIDE STRESS RESISTANCE PROTEIN YAAA"/>
    <property type="match status" value="1"/>
</dbReference>
<dbReference type="PANTHER" id="PTHR30283">
    <property type="entry name" value="PEROXIDE STRESS RESPONSE PROTEIN YAAA"/>
    <property type="match status" value="1"/>
</dbReference>
<dbReference type="Pfam" id="PF03883">
    <property type="entry name" value="H2O2_YaaD"/>
    <property type="match status" value="1"/>
</dbReference>
<accession>Q1C0K7</accession>
<reference key="1">
    <citation type="journal article" date="2006" name="J. Bacteriol.">
        <title>Complete genome sequence of Yersinia pestis strains Antiqua and Nepal516: evidence of gene reduction in an emerging pathogen.</title>
        <authorList>
            <person name="Chain P.S.G."/>
            <person name="Hu P."/>
            <person name="Malfatti S.A."/>
            <person name="Radnedge L."/>
            <person name="Larimer F."/>
            <person name="Vergez L.M."/>
            <person name="Worsham P."/>
            <person name="Chu M.C."/>
            <person name="Andersen G.L."/>
        </authorList>
    </citation>
    <scope>NUCLEOTIDE SEQUENCE [LARGE SCALE GENOMIC DNA]</scope>
    <source>
        <strain>Antiqua</strain>
    </source>
</reference>
<comment type="similarity">
    <text evidence="1">Belongs to the UPF0246 family.</text>
</comment>
<comment type="sequence caution" evidence="2">
    <conflict type="erroneous initiation">
        <sequence resource="EMBL-CDS" id="ABG16015"/>
    </conflict>
</comment>